<evidence type="ECO:0000255" key="1">
    <source>
        <dbReference type="HAMAP-Rule" id="MF_00385"/>
    </source>
</evidence>
<evidence type="ECO:0000305" key="2"/>
<accession>Q89AE3</accession>
<name>RS16_BUCBP</name>
<proteinExistence type="inferred from homology"/>
<keyword id="KW-1185">Reference proteome</keyword>
<keyword id="KW-0687">Ribonucleoprotein</keyword>
<keyword id="KW-0689">Ribosomal protein</keyword>
<dbReference type="EMBL" id="AE016826">
    <property type="protein sequence ID" value="AAO27076.1"/>
    <property type="molecule type" value="Genomic_DNA"/>
</dbReference>
<dbReference type="RefSeq" id="WP_011091477.1">
    <property type="nucleotide sequence ID" value="NC_004545.1"/>
</dbReference>
<dbReference type="SMR" id="Q89AE3"/>
<dbReference type="STRING" id="224915.bbp_357"/>
<dbReference type="KEGG" id="bab:bbp_357"/>
<dbReference type="eggNOG" id="COG0228">
    <property type="taxonomic scope" value="Bacteria"/>
</dbReference>
<dbReference type="HOGENOM" id="CLU_100590_5_0_6"/>
<dbReference type="OrthoDB" id="9807878at2"/>
<dbReference type="Proteomes" id="UP000000601">
    <property type="component" value="Chromosome"/>
</dbReference>
<dbReference type="GO" id="GO:0005737">
    <property type="term" value="C:cytoplasm"/>
    <property type="evidence" value="ECO:0007669"/>
    <property type="project" value="UniProtKB-ARBA"/>
</dbReference>
<dbReference type="GO" id="GO:0015935">
    <property type="term" value="C:small ribosomal subunit"/>
    <property type="evidence" value="ECO:0007669"/>
    <property type="project" value="TreeGrafter"/>
</dbReference>
<dbReference type="GO" id="GO:0003735">
    <property type="term" value="F:structural constituent of ribosome"/>
    <property type="evidence" value="ECO:0007669"/>
    <property type="project" value="InterPro"/>
</dbReference>
<dbReference type="GO" id="GO:0006412">
    <property type="term" value="P:translation"/>
    <property type="evidence" value="ECO:0007669"/>
    <property type="project" value="UniProtKB-UniRule"/>
</dbReference>
<dbReference type="Gene3D" id="3.30.1320.10">
    <property type="match status" value="1"/>
</dbReference>
<dbReference type="HAMAP" id="MF_00385">
    <property type="entry name" value="Ribosomal_bS16"/>
    <property type="match status" value="1"/>
</dbReference>
<dbReference type="InterPro" id="IPR000307">
    <property type="entry name" value="Ribosomal_bS16"/>
</dbReference>
<dbReference type="InterPro" id="IPR023803">
    <property type="entry name" value="Ribosomal_bS16_dom_sf"/>
</dbReference>
<dbReference type="NCBIfam" id="TIGR00002">
    <property type="entry name" value="S16"/>
    <property type="match status" value="1"/>
</dbReference>
<dbReference type="PANTHER" id="PTHR12919">
    <property type="entry name" value="30S RIBOSOMAL PROTEIN S16"/>
    <property type="match status" value="1"/>
</dbReference>
<dbReference type="PANTHER" id="PTHR12919:SF20">
    <property type="entry name" value="SMALL RIBOSOMAL SUBUNIT PROTEIN BS16M"/>
    <property type="match status" value="1"/>
</dbReference>
<dbReference type="Pfam" id="PF00886">
    <property type="entry name" value="Ribosomal_S16"/>
    <property type="match status" value="1"/>
</dbReference>
<dbReference type="SUPFAM" id="SSF54565">
    <property type="entry name" value="Ribosomal protein S16"/>
    <property type="match status" value="1"/>
</dbReference>
<gene>
    <name evidence="1" type="primary">rpsP</name>
    <name type="ordered locus">bbp_357</name>
</gene>
<comment type="similarity">
    <text evidence="1">Belongs to the bacterial ribosomal protein bS16 family.</text>
</comment>
<reference key="1">
    <citation type="journal article" date="2003" name="Proc. Natl. Acad. Sci. U.S.A.">
        <title>Reductive genome evolution in Buchnera aphidicola.</title>
        <authorList>
            <person name="van Ham R.C.H.J."/>
            <person name="Kamerbeek J."/>
            <person name="Palacios C."/>
            <person name="Rausell C."/>
            <person name="Abascal F."/>
            <person name="Bastolla U."/>
            <person name="Fernandez J.M."/>
            <person name="Jimenez L."/>
            <person name="Postigo M."/>
            <person name="Silva F.J."/>
            <person name="Tamames J."/>
            <person name="Viguera E."/>
            <person name="Latorre A."/>
            <person name="Valencia A."/>
            <person name="Moran F."/>
            <person name="Moya A."/>
        </authorList>
    </citation>
    <scope>NUCLEOTIDE SEQUENCE [LARGE SCALE GENOMIC DNA]</scope>
    <source>
        <strain>Bp</strain>
    </source>
</reference>
<sequence length="87" mass="10269">MVKIRLVRLGAKKRPFYKIVIADSRYPRNGKFIEKIGFFKPLLSIKHPPQICINTLRITHWIKNGAIMSKRVKKLVKIHSYINKKIK</sequence>
<feature type="chain" id="PRO_0000167165" description="Small ribosomal subunit protein bS16">
    <location>
        <begin position="1"/>
        <end position="87"/>
    </location>
</feature>
<organism>
    <name type="scientific">Buchnera aphidicola subsp. Baizongia pistaciae (strain Bp)</name>
    <dbReference type="NCBI Taxonomy" id="224915"/>
    <lineage>
        <taxon>Bacteria</taxon>
        <taxon>Pseudomonadati</taxon>
        <taxon>Pseudomonadota</taxon>
        <taxon>Gammaproteobacteria</taxon>
        <taxon>Enterobacterales</taxon>
        <taxon>Erwiniaceae</taxon>
        <taxon>Buchnera</taxon>
    </lineage>
</organism>
<protein>
    <recommendedName>
        <fullName evidence="1">Small ribosomal subunit protein bS16</fullName>
    </recommendedName>
    <alternativeName>
        <fullName evidence="2">30S ribosomal protein S16</fullName>
    </alternativeName>
</protein>